<dbReference type="EMBL" id="AE017345">
    <property type="protein sequence ID" value="AAW43682.2"/>
    <property type="molecule type" value="Genomic_DNA"/>
</dbReference>
<dbReference type="RefSeq" id="XP_570989.1">
    <property type="nucleotide sequence ID" value="XM_570989.1"/>
</dbReference>
<dbReference type="SMR" id="P0CN64"/>
<dbReference type="FunCoup" id="P0CN64">
    <property type="interactions" value="697"/>
</dbReference>
<dbReference type="STRING" id="214684.P0CN64"/>
<dbReference type="PaxDb" id="214684-P0CN64"/>
<dbReference type="eggNOG" id="KOG2021">
    <property type="taxonomic scope" value="Eukaryota"/>
</dbReference>
<dbReference type="HOGENOM" id="CLU_004414_0_0_1"/>
<dbReference type="InParanoid" id="P0CN64"/>
<dbReference type="Proteomes" id="UP000002149">
    <property type="component" value="Chromosome 5"/>
</dbReference>
<dbReference type="GO" id="GO:0005737">
    <property type="term" value="C:cytoplasm"/>
    <property type="evidence" value="ECO:0000318"/>
    <property type="project" value="GO_Central"/>
</dbReference>
<dbReference type="GO" id="GO:0016363">
    <property type="term" value="C:nuclear matrix"/>
    <property type="evidence" value="ECO:0000318"/>
    <property type="project" value="GO_Central"/>
</dbReference>
<dbReference type="GO" id="GO:0005643">
    <property type="term" value="C:nuclear pore"/>
    <property type="evidence" value="ECO:0000318"/>
    <property type="project" value="GO_Central"/>
</dbReference>
<dbReference type="GO" id="GO:0031267">
    <property type="term" value="F:small GTPase binding"/>
    <property type="evidence" value="ECO:0007669"/>
    <property type="project" value="InterPro"/>
</dbReference>
<dbReference type="GO" id="GO:0000049">
    <property type="term" value="F:tRNA binding"/>
    <property type="evidence" value="ECO:0000318"/>
    <property type="project" value="GO_Central"/>
</dbReference>
<dbReference type="GO" id="GO:0008033">
    <property type="term" value="P:tRNA processing"/>
    <property type="evidence" value="ECO:0007669"/>
    <property type="project" value="UniProtKB-KW"/>
</dbReference>
<dbReference type="GO" id="GO:0071528">
    <property type="term" value="P:tRNA re-export from nucleus"/>
    <property type="evidence" value="ECO:0000318"/>
    <property type="project" value="GO_Central"/>
</dbReference>
<dbReference type="Gene3D" id="1.25.10.10">
    <property type="entry name" value="Leucine-rich Repeat Variant"/>
    <property type="match status" value="1"/>
</dbReference>
<dbReference type="InterPro" id="IPR011989">
    <property type="entry name" value="ARM-like"/>
</dbReference>
<dbReference type="InterPro" id="IPR016024">
    <property type="entry name" value="ARM-type_fold"/>
</dbReference>
<dbReference type="InterPro" id="IPR013598">
    <property type="entry name" value="Exportin-1/Importin-b-like"/>
</dbReference>
<dbReference type="InterPro" id="IPR045546">
    <property type="entry name" value="Exportin-T_C"/>
</dbReference>
<dbReference type="InterPro" id="IPR040017">
    <property type="entry name" value="XPOT"/>
</dbReference>
<dbReference type="PANTHER" id="PTHR15952:SF11">
    <property type="entry name" value="EXPORTIN-T"/>
    <property type="match status" value="1"/>
</dbReference>
<dbReference type="PANTHER" id="PTHR15952">
    <property type="entry name" value="EXPORTIN-T/LOS1"/>
    <property type="match status" value="1"/>
</dbReference>
<dbReference type="Pfam" id="PF19282">
    <property type="entry name" value="Exportin-T"/>
    <property type="match status" value="2"/>
</dbReference>
<dbReference type="Pfam" id="PF08389">
    <property type="entry name" value="Xpo1"/>
    <property type="match status" value="1"/>
</dbReference>
<dbReference type="SUPFAM" id="SSF48371">
    <property type="entry name" value="ARM repeat"/>
    <property type="match status" value="1"/>
</dbReference>
<name>XPOT_CRYNJ</name>
<protein>
    <recommendedName>
        <fullName>Exportin-T</fullName>
    </recommendedName>
    <alternativeName>
        <fullName>Exportin(tRNA)</fullName>
    </alternativeName>
    <alternativeName>
        <fullName>Karyopherin-beta</fullName>
    </alternativeName>
    <alternativeName>
        <fullName>tRNA exportin</fullName>
    </alternativeName>
</protein>
<reference key="1">
    <citation type="journal article" date="2005" name="Science">
        <title>The genome of the basidiomycetous yeast and human pathogen Cryptococcus neoformans.</title>
        <authorList>
            <person name="Loftus B.J."/>
            <person name="Fung E."/>
            <person name="Roncaglia P."/>
            <person name="Rowley D."/>
            <person name="Amedeo P."/>
            <person name="Bruno D."/>
            <person name="Vamathevan J."/>
            <person name="Miranda M."/>
            <person name="Anderson I.J."/>
            <person name="Fraser J.A."/>
            <person name="Allen J.E."/>
            <person name="Bosdet I.E."/>
            <person name="Brent M.R."/>
            <person name="Chiu R."/>
            <person name="Doering T.L."/>
            <person name="Donlin M.J."/>
            <person name="D'Souza C.A."/>
            <person name="Fox D.S."/>
            <person name="Grinberg V."/>
            <person name="Fu J."/>
            <person name="Fukushima M."/>
            <person name="Haas B.J."/>
            <person name="Huang J.C."/>
            <person name="Janbon G."/>
            <person name="Jones S.J.M."/>
            <person name="Koo H.L."/>
            <person name="Krzywinski M.I."/>
            <person name="Kwon-Chung K.J."/>
            <person name="Lengeler K.B."/>
            <person name="Maiti R."/>
            <person name="Marra M.A."/>
            <person name="Marra R.E."/>
            <person name="Mathewson C.A."/>
            <person name="Mitchell T.G."/>
            <person name="Pertea M."/>
            <person name="Riggs F.R."/>
            <person name="Salzberg S.L."/>
            <person name="Schein J.E."/>
            <person name="Shvartsbeyn A."/>
            <person name="Shin H."/>
            <person name="Shumway M."/>
            <person name="Specht C.A."/>
            <person name="Suh B.B."/>
            <person name="Tenney A."/>
            <person name="Utterback T.R."/>
            <person name="Wickes B.L."/>
            <person name="Wortman J.R."/>
            <person name="Wye N.H."/>
            <person name="Kronstad J.W."/>
            <person name="Lodge J.K."/>
            <person name="Heitman J."/>
            <person name="Davis R.W."/>
            <person name="Fraser C.M."/>
            <person name="Hyman R.W."/>
        </authorList>
    </citation>
    <scope>NUCLEOTIDE SEQUENCE [LARGE SCALE GENOMIC DNA]</scope>
    <source>
        <strain>JEC21 / ATCC MYA-565</strain>
    </source>
</reference>
<feature type="chain" id="PRO_0000343091" description="Exportin-T">
    <location>
        <begin position="1"/>
        <end position="1143"/>
    </location>
</feature>
<feature type="region of interest" description="Disordered" evidence="2">
    <location>
        <begin position="566"/>
        <end position="593"/>
    </location>
</feature>
<feature type="compositionally biased region" description="Polar residues" evidence="2">
    <location>
        <begin position="576"/>
        <end position="593"/>
    </location>
</feature>
<organism>
    <name type="scientific">Cryptococcus neoformans var. neoformans serotype D (strain JEC21 / ATCC MYA-565)</name>
    <name type="common">Filobasidiella neoformans</name>
    <dbReference type="NCBI Taxonomy" id="214684"/>
    <lineage>
        <taxon>Eukaryota</taxon>
        <taxon>Fungi</taxon>
        <taxon>Dikarya</taxon>
        <taxon>Basidiomycota</taxon>
        <taxon>Agaricomycotina</taxon>
        <taxon>Tremellomycetes</taxon>
        <taxon>Tremellales</taxon>
        <taxon>Cryptococcaceae</taxon>
        <taxon>Cryptococcus</taxon>
        <taxon>Cryptococcus neoformans species complex</taxon>
    </lineage>
</organism>
<accession>P0CN64</accession>
<accession>Q55S99</accession>
<accession>Q5KGP6</accession>
<comment type="function">
    <text evidence="1">tRNA nucleus export receptor which facilitates tRNA translocation across the nuclear pore complex. Involved in pre-tRNA splicing, probably by affecting the interaction of pre-tRNA with splicing endonuclease (By similarity).</text>
</comment>
<comment type="subcellular location">
    <subcellularLocation>
        <location evidence="1">Nucleus</location>
    </subcellularLocation>
    <subcellularLocation>
        <location evidence="1">Cytoplasm</location>
    </subcellularLocation>
    <text evidence="1">Shuttles between the nucleus and the cytoplasm.</text>
</comment>
<comment type="similarity">
    <text evidence="3">Belongs to the exportin family.</text>
</comment>
<gene>
    <name type="primary">LOS1</name>
    <name type="ordered locus">CNE02810</name>
</gene>
<proteinExistence type="inferred from homology"/>
<keyword id="KW-0963">Cytoplasm</keyword>
<keyword id="KW-0539">Nucleus</keyword>
<keyword id="KW-1185">Reference proteome</keyword>
<keyword id="KW-0694">RNA-binding</keyword>
<keyword id="KW-0813">Transport</keyword>
<keyword id="KW-0819">tRNA processing</keyword>
<keyword id="KW-0820">tRNA-binding</keyword>
<sequence>MAATSPHLTSIPQAVRVAASIDPSIDPGLKQQAIDYLTKVKQLSEETWQDCLQLYLQGAGAPGPSTTGRDGKEKLETDMRMFCLQVVDTVLIQKPEVMGADAVQGMYEAIVEFIQVEYIGGSCEGGQGFLRNKLAFTISQLFLRAFPSHIPTFLHPFFALLSPPTSSPPNLHPQLLTIRLLLEIAQEIHDTTLKTARIMTKERQERDGVVRDVIRSSGDDKTAVQGMLGIIEKGLEQMNSGNSSDKWAEAVDATLKTLSAWIPWIDLGVALNPTTLPFYHRLLHQPILSFRTATAGIYRTLVAKGIQDPSSRLQVLRVLAPVAVIDPLETETRGGKSEEVATFRASLGVVLSAYGVALIGISDNTEVAEQLRNEAEEMMNPALPLLLRFLSDRQYEVPLSVSPFVSDLLRIYKRMYKPPNPSTKAGQAPSPPSTLPQLSPERRQFLASMLDILIRQLAWPEDTEWEAPGNEDELDEDIAAFKNFRGSCRSFIESIAQIDKSLHTEVVARIVIATLDAYASGGGAAAVPWQQAELAMHLVYTFGEVSKNSTRAAFYELPPEMATKAARNKLRAAQGSGRTTPSSSDNVDLGPSSNNDRLEYEQFPLSPLGQLLTRCMTSGISSYPHPSVTLQYFEIIVRYIEFWKAKPETLPGLFEALLDGQGIHNSDEGVRRRCFYLFSKLCKDCRNDTVEGMVSPILDSMRDMMVINAELPPTDTPDEDPLIKATTGKSYVADQLYLFEASGNLVYLTKADPAKQMALLEAVAGPLLSGLGSGVERARVDENDLQAVLQVHHHLMALGHFAKGFPIVPDKLVELLPYTGPFKQMAEALLQAIEILKRRRVVRDAARFAFSQFANAIGTPVAELVPRFVSAVVTEFEPSELVDFLLFLQLLMHRLQGSTFETMDMLLLPLLSRIFTVLQQPVTGTDEAQVHARLKDAYLAFFTSLMNENLDGIFITDRNKPEFENVLTTLFNLTQDYSDGASQRLAFGFFSRSVIAWGTSPEAAARPSVFAESAMASQSKMVSGGGTAQPNAHAVTQEQRAKQCLPGYENFIYQRLLPAAFEVPANSQFNIRGGQLIVHEAAVLVRNTVQARGQEAIDFMLSDLLRRLNCPSDIANQLIASLTTQQAKDFKKTFFDFIKAMRG</sequence>
<evidence type="ECO:0000250" key="1"/>
<evidence type="ECO:0000256" key="2">
    <source>
        <dbReference type="SAM" id="MobiDB-lite"/>
    </source>
</evidence>
<evidence type="ECO:0000305" key="3"/>